<sequence length="1063" mass="115656">MFERIISFAIQQRWLVLLAVFGMAGLGIFSYNRLPIDAVPDITNVQVQVNTSAPGYSPLETEQRVTYPIEVVMAGLPGLEQTRSLSRYGLSQVTVIFKDGTDVYFARQLVNQRIQEAKDNLPEGVVPAMGPISTGLGEIYLWTVEAEEGARKADGTAYTPTDLREIQDWVVRPQLRNVPGVTEINTIGGFNKQYLVAPSLERLASYGLTLTDVVNALNKNNDNVGAGYIERRGEQYLVRAPGQVASEDDIRNIIVGTAQGQPIRIRDIGDVEIGKELRTGAATENGKEVVLGTVFMLIGENSRAVSKAVDEKVASINRTMPEGVKIVTVYDRTRLVDKAIATVKKNLLEGAVLVIVILFLFLGNIRAALITATIIPLAMLFTFTGMVNYKISANLMSLGALDFGIIIDGAVVIVENCVRRLAHAQEHHGRPLTRSERFHEVFAAAKEARRPLIFGQLIIMIVYLPIFALTGVEGKMFHPMAFTVVLALLGAMILSVTFVPAAVALFIGERVAEKENRLMLWAKRRYEPLLEKSLANTAVVLTFAAVSIVLCVAIAARLGSEFIPNLNEGDIAIQALRIPGTSLSQSVEMQKTIETTLKAKFPEIERVFARTGTAEIASDPMPPNISDGYIMLKPEKDWPEPKKTHAELLSAIQEEAGKIPGNNYEFSQPIQLRFNELISGVRSDVAVKIFGDDNNVLSETAKKVSAVLQGIPGAQEVKVEQTTGLPMLTVKIDREKAARYGLNMSDVQDAVATGVGGRDSGTFFQGDRRFDIVVRLPEAVRGEVEALRRLPIPLPKGVDARTTFIPLSEVATLEMAPGPNQISRENGKRRIVISANVRGRDIGSFVPEAEAAIQSQVKIPAGYWMTWGGTFEQLQSATTRLQVVVPVALLLVFVLLFAMFNNIKDGLLVFTGIPFALTGGILALWIRGIPMSITAAVGFIALCGVAVLNGLVMLSFIRSLREEGHSLDSAVRVGALTRLRPVLMTALVASLGFVPMAIATGTGAEVQRPLATVVIGGILSSTALTLLVLPVLYRLAHRKDEDAEDTREPVTQTHQPDQGRQPA</sequence>
<keyword id="KW-0105">Cadmium resistance</keyword>
<keyword id="KW-1003">Cell membrane</keyword>
<keyword id="KW-0170">Cobalt</keyword>
<keyword id="KW-0472">Membrane</keyword>
<keyword id="KW-0614">Plasmid</keyword>
<keyword id="KW-0812">Transmembrane</keyword>
<keyword id="KW-1133">Transmembrane helix</keyword>
<keyword id="KW-0813">Transport</keyword>
<keyword id="KW-0862">Zinc</keyword>
<proteinExistence type="inferred from homology"/>
<comment type="function">
    <text>Has a low cation transport activity for cobalt, it is essential for the expression of cobalt, zinc, and cadmium resistance. CzcA and CzcB together would act in zinc efflux nearly as effectively as the complete CZC efflux system (CzcABC).</text>
</comment>
<comment type="subcellular location">
    <subcellularLocation>
        <location evidence="3">Cell membrane</location>
        <topology evidence="3">Multi-pass membrane protein</topology>
    </subcellularLocation>
</comment>
<comment type="similarity">
    <text evidence="3">Belongs to the resistance-nodulation-cell division (RND) (TC 2.A.6) family.</text>
</comment>
<gene>
    <name type="primary">czcA</name>
</gene>
<organism>
    <name type="scientific">Alcaligenes sp. (strain CT14)</name>
    <dbReference type="NCBI Taxonomy" id="68998"/>
    <lineage>
        <taxon>Bacteria</taxon>
        <taxon>Pseudomonadati</taxon>
        <taxon>Pseudomonadota</taxon>
        <taxon>Betaproteobacteria</taxon>
        <taxon>Burkholderiales</taxon>
        <taxon>Alcaligenaceae</taxon>
        <taxon>Alcaligenes</taxon>
    </lineage>
</organism>
<evidence type="ECO:0000255" key="1"/>
<evidence type="ECO:0000256" key="2">
    <source>
        <dbReference type="SAM" id="MobiDB-lite"/>
    </source>
</evidence>
<evidence type="ECO:0000305" key="3"/>
<reference key="1">
    <citation type="journal article" date="1996" name="Biosci. Biotechnol. Biochem.">
        <title>Cloning and sequence analysis of czc genes in Alcaligenes sp. strain CT14.</title>
        <authorList>
            <person name="Kunito T."/>
            <person name="Kusano T."/>
            <person name="Oyaizu H."/>
            <person name="Senoo K."/>
            <person name="Kanazawa S."/>
            <person name="Matsumoto S."/>
        </authorList>
    </citation>
    <scope>NUCLEOTIDE SEQUENCE [GENOMIC DNA]</scope>
</reference>
<name>CZCA_ALCSC</name>
<feature type="chain" id="PRO_0000161819" description="Cation efflux system protein CzcA">
    <location>
        <begin position="1"/>
        <end position="1063"/>
    </location>
</feature>
<feature type="transmembrane region" description="Helical" evidence="1">
    <location>
        <begin position="14"/>
        <end position="29"/>
    </location>
</feature>
<feature type="transmembrane region" description="Helical" evidence="1">
    <location>
        <begin position="350"/>
        <end position="370"/>
    </location>
</feature>
<feature type="transmembrane region" description="Helical" evidence="1">
    <location>
        <begin position="452"/>
        <end position="472"/>
    </location>
</feature>
<feature type="transmembrane region" description="Helical" evidence="1">
    <location>
        <begin position="487"/>
        <end position="507"/>
    </location>
</feature>
<feature type="transmembrane region" description="Helical" evidence="1">
    <location>
        <begin position="534"/>
        <end position="554"/>
    </location>
</feature>
<feature type="transmembrane region" description="Helical" evidence="1">
    <location>
        <begin position="883"/>
        <end position="903"/>
    </location>
</feature>
<feature type="transmembrane region" description="Helical" evidence="1">
    <location>
        <begin position="906"/>
        <end position="926"/>
    </location>
</feature>
<feature type="transmembrane region" description="Helical" evidence="1">
    <location>
        <begin position="937"/>
        <end position="957"/>
    </location>
</feature>
<feature type="transmembrane region" description="Helical" evidence="1">
    <location>
        <begin position="982"/>
        <end position="1004"/>
    </location>
</feature>
<feature type="transmembrane region" description="Helical" evidence="1">
    <location>
        <begin position="1013"/>
        <end position="1033"/>
    </location>
</feature>
<feature type="region of interest" description="Disordered" evidence="2">
    <location>
        <begin position="1040"/>
        <end position="1063"/>
    </location>
</feature>
<feature type="compositionally biased region" description="Polar residues" evidence="2">
    <location>
        <begin position="1049"/>
        <end position="1063"/>
    </location>
</feature>
<accession>P94177</accession>
<dbReference type="EMBL" id="D67044">
    <property type="protein sequence ID" value="BAA11061.1"/>
    <property type="molecule type" value="Genomic_DNA"/>
</dbReference>
<dbReference type="PIR" id="JC4700">
    <property type="entry name" value="JC4700"/>
</dbReference>
<dbReference type="SMR" id="P94177"/>
<dbReference type="GO" id="GO:0005886">
    <property type="term" value="C:plasma membrane"/>
    <property type="evidence" value="ECO:0007669"/>
    <property type="project" value="UniProtKB-SubCell"/>
</dbReference>
<dbReference type="GO" id="GO:0008324">
    <property type="term" value="F:monoatomic cation transmembrane transporter activity"/>
    <property type="evidence" value="ECO:0007669"/>
    <property type="project" value="InterPro"/>
</dbReference>
<dbReference type="GO" id="GO:0042910">
    <property type="term" value="F:xenobiotic transmembrane transporter activity"/>
    <property type="evidence" value="ECO:0007669"/>
    <property type="project" value="TreeGrafter"/>
</dbReference>
<dbReference type="GO" id="GO:0046686">
    <property type="term" value="P:response to cadmium ion"/>
    <property type="evidence" value="ECO:0007669"/>
    <property type="project" value="UniProtKB-KW"/>
</dbReference>
<dbReference type="Gene3D" id="3.30.70.1430">
    <property type="entry name" value="Multidrug efflux transporter AcrB pore domain"/>
    <property type="match status" value="2"/>
</dbReference>
<dbReference type="Gene3D" id="3.30.70.1440">
    <property type="entry name" value="Multidrug efflux transporter AcrB pore domain"/>
    <property type="match status" value="1"/>
</dbReference>
<dbReference type="Gene3D" id="3.30.70.1320">
    <property type="entry name" value="Multidrug efflux transporter AcrB pore domain like"/>
    <property type="match status" value="1"/>
</dbReference>
<dbReference type="Gene3D" id="3.30.2090.10">
    <property type="entry name" value="Multidrug efflux transporter AcrB TolC docking domain, DN and DC subdomains"/>
    <property type="match status" value="2"/>
</dbReference>
<dbReference type="Gene3D" id="1.20.1640.10">
    <property type="entry name" value="Multidrug efflux transporter AcrB transmembrane domain"/>
    <property type="match status" value="2"/>
</dbReference>
<dbReference type="InterPro" id="IPR027463">
    <property type="entry name" value="AcrB_DN_DC_subdom"/>
</dbReference>
<dbReference type="InterPro" id="IPR001036">
    <property type="entry name" value="Acrflvin-R"/>
</dbReference>
<dbReference type="InterPro" id="IPR004763">
    <property type="entry name" value="CusA-like"/>
</dbReference>
<dbReference type="NCBIfam" id="TIGR00914">
    <property type="entry name" value="2A0601"/>
    <property type="match status" value="1"/>
</dbReference>
<dbReference type="PANTHER" id="PTHR32063">
    <property type="match status" value="1"/>
</dbReference>
<dbReference type="PANTHER" id="PTHR32063:SF24">
    <property type="entry name" value="CATION EFFLUX SYSTEM (ACRB_ACRD_ACRF FAMILY)"/>
    <property type="match status" value="1"/>
</dbReference>
<dbReference type="Pfam" id="PF00873">
    <property type="entry name" value="ACR_tran"/>
    <property type="match status" value="1"/>
</dbReference>
<dbReference type="PRINTS" id="PR00702">
    <property type="entry name" value="ACRIFLAVINRP"/>
</dbReference>
<dbReference type="SUPFAM" id="SSF82693">
    <property type="entry name" value="Multidrug efflux transporter AcrB pore domain, PN1, PN2, PC1 and PC2 subdomains"/>
    <property type="match status" value="3"/>
</dbReference>
<dbReference type="SUPFAM" id="SSF82714">
    <property type="entry name" value="Multidrug efflux transporter AcrB TolC docking domain, DN and DC subdomains"/>
    <property type="match status" value="2"/>
</dbReference>
<dbReference type="SUPFAM" id="SSF82866">
    <property type="entry name" value="Multidrug efflux transporter AcrB transmembrane domain"/>
    <property type="match status" value="2"/>
</dbReference>
<protein>
    <recommendedName>
        <fullName>Cation efflux system protein CzcA</fullName>
    </recommendedName>
</protein>